<name>WECA_AERHY</name>
<evidence type="ECO:0000255" key="1"/>
<evidence type="ECO:0000269" key="2">
    <source>
    </source>
</evidence>
<evidence type="ECO:0000305" key="3"/>
<protein>
    <recommendedName>
        <fullName>UDP-N-acetylgalactosamine-undecaprenyl-phosphate N-acetylgalactosaminephosphotransferase</fullName>
        <ecNumber>2.7.8.40</ecNumber>
    </recommendedName>
</protein>
<dbReference type="EC" id="2.7.8.40"/>
<dbReference type="EMBL" id="EU274663">
    <property type="protein sequence ID" value="ABX39510.2"/>
    <property type="molecule type" value="Genomic_DNA"/>
</dbReference>
<dbReference type="SMR" id="B3FN88"/>
<dbReference type="KEGG" id="ag:ABX39510"/>
<dbReference type="eggNOG" id="COG2148">
    <property type="taxonomic scope" value="Bacteria"/>
</dbReference>
<dbReference type="BioCyc" id="MetaCyc:MONOMER-18064"/>
<dbReference type="BRENDA" id="2.7.8.40">
    <property type="organism ID" value="164"/>
</dbReference>
<dbReference type="UniPathway" id="UPA00281"/>
<dbReference type="GO" id="GO:0016020">
    <property type="term" value="C:membrane"/>
    <property type="evidence" value="ECO:0007669"/>
    <property type="project" value="UniProtKB-SubCell"/>
</dbReference>
<dbReference type="GO" id="GO:0016780">
    <property type="term" value="F:phosphotransferase activity, for other substituted phosphate groups"/>
    <property type="evidence" value="ECO:0000314"/>
    <property type="project" value="UniProtKB"/>
</dbReference>
<dbReference type="GO" id="GO:0009243">
    <property type="term" value="P:O antigen biosynthetic process"/>
    <property type="evidence" value="ECO:0000314"/>
    <property type="project" value="UniProtKB"/>
</dbReference>
<dbReference type="InterPro" id="IPR003362">
    <property type="entry name" value="Bact_transf"/>
</dbReference>
<dbReference type="InterPro" id="IPR017475">
    <property type="entry name" value="EPS_sugar_tfrase"/>
</dbReference>
<dbReference type="NCBIfam" id="TIGR03025">
    <property type="entry name" value="EPS_sugtrans"/>
    <property type="match status" value="1"/>
</dbReference>
<dbReference type="PANTHER" id="PTHR30576">
    <property type="entry name" value="COLANIC BIOSYNTHESIS UDP-GLUCOSE LIPID CARRIER TRANSFERASE"/>
    <property type="match status" value="1"/>
</dbReference>
<dbReference type="PANTHER" id="PTHR30576:SF0">
    <property type="entry name" value="UNDECAPRENYL-PHOSPHATE N-ACETYLGALACTOSAMINYL 1-PHOSPHATE TRANSFERASE-RELATED"/>
    <property type="match status" value="1"/>
</dbReference>
<dbReference type="Pfam" id="PF02397">
    <property type="entry name" value="Bac_transf"/>
    <property type="match status" value="1"/>
</dbReference>
<organism>
    <name type="scientific">Aeromonas hydrophila</name>
    <dbReference type="NCBI Taxonomy" id="644"/>
    <lineage>
        <taxon>Bacteria</taxon>
        <taxon>Pseudomonadati</taxon>
        <taxon>Pseudomonadota</taxon>
        <taxon>Gammaproteobacteria</taxon>
        <taxon>Aeromonadales</taxon>
        <taxon>Aeromonadaceae</taxon>
        <taxon>Aeromonas</taxon>
    </lineage>
</organism>
<accession>B3FN88</accession>
<proteinExistence type="evidence at protein level"/>
<comment type="function">
    <text evidence="2">Transfers N-acetyl-galactosamine (GalNAc) to undecaprenyl phosphate, a step in the assembly of the repeating-unit of the O-antigen. Shows no activity with UDP-N-acetyl-alpha-D-glucosamine.</text>
</comment>
<comment type="catalytic activity">
    <reaction evidence="2">
        <text>di-trans,octa-cis-undecaprenyl phosphate + UDP-N-acetyl-alpha-D-galactosamine = N-acetyl-alpha-D-galactosaminyl-di-trans,octa-cis-undecaprenyl diphosphate + UMP</text>
        <dbReference type="Rhea" id="RHEA:36787"/>
        <dbReference type="ChEBI" id="CHEBI:57865"/>
        <dbReference type="ChEBI" id="CHEBI:60392"/>
        <dbReference type="ChEBI" id="CHEBI:67138"/>
        <dbReference type="ChEBI" id="CHEBI:74214"/>
        <dbReference type="EC" id="2.7.8.40"/>
    </reaction>
</comment>
<comment type="pathway">
    <text evidence="2">Bacterial outer membrane biogenesis; LPS O-antigen biosynthesis.</text>
</comment>
<comment type="subcellular location">
    <subcellularLocation>
        <location evidence="3">Membrane</location>
        <topology evidence="3">Multi-pass membrane protein</topology>
    </subcellularLocation>
</comment>
<comment type="similarity">
    <text evidence="3">Belongs to the bacterial sugar transferase family.</text>
</comment>
<gene>
    <name type="primary">wecA</name>
</gene>
<feature type="chain" id="PRO_0000424131" description="UDP-N-acetylgalactosamine-undecaprenyl-phosphate N-acetylgalactosaminephosphotransferase">
    <location>
        <begin position="1"/>
        <end position="423"/>
    </location>
</feature>
<feature type="topological domain" description="Extracellular" evidence="1">
    <location>
        <begin position="1"/>
        <end position="13"/>
    </location>
</feature>
<feature type="transmembrane region" description="Helical" evidence="1">
    <location>
        <begin position="14"/>
        <end position="34"/>
    </location>
</feature>
<feature type="topological domain" description="Cytoplasmic" evidence="1">
    <location>
        <begin position="35"/>
        <end position="47"/>
    </location>
</feature>
<feature type="transmembrane region" description="Helical" evidence="1">
    <location>
        <begin position="48"/>
        <end position="68"/>
    </location>
</feature>
<feature type="topological domain" description="Extracellular" evidence="1">
    <location>
        <begin position="69"/>
        <end position="79"/>
    </location>
</feature>
<feature type="transmembrane region" description="Helical" evidence="1">
    <location>
        <begin position="80"/>
        <end position="100"/>
    </location>
</feature>
<feature type="topological domain" description="Cytoplasmic" evidence="1">
    <location>
        <begin position="101"/>
        <end position="107"/>
    </location>
</feature>
<feature type="transmembrane region" description="Helical" evidence="1">
    <location>
        <begin position="108"/>
        <end position="128"/>
    </location>
</feature>
<feature type="topological domain" description="Extracellular" evidence="1">
    <location>
        <begin position="129"/>
        <end position="239"/>
    </location>
</feature>
<feature type="transmembrane region" description="Helical" evidence="1">
    <location>
        <begin position="240"/>
        <end position="260"/>
    </location>
</feature>
<feature type="topological domain" description="Cytoplasmic" evidence="1">
    <location>
        <begin position="261"/>
        <end position="423"/>
    </location>
</feature>
<sequence length="423" mass="48850">MSYQRRHSRWYERVLFSPPSLFFLGAMLAVCLPALERWGWGFWEYFDAVRVNTLGGAFVAFLLTGIVLYRFLRYPGASPVAYMIPTVTTLYGSLVGALFFLRLPYSRQVLFESYVVALLCCWVVYFIGRRYRTPKYALLPFGDYQPLMHHTCVEWRLLDKPDLGAVRYDAVVADLRDDDLAGEWERFLARCALAHIPVYHIKQISETLTGRVKIDHLHENQLGSLLPSPIYAFIKRGMDILAAVIAIPLFSPLMLATAVLIKLESPGPVMFLQNRVGKGNRDFRIYKFRSMCQNSEQHGAQFAQDGDMRVTRVGKVIRKLRIDELPQFFNVLKGDMSLIGPRPEQRTFVDQFDREIPFYMYRHIVRPGISGWAQVVHGYAADADDTRIKIEHDFYYIKNFSLWLDVLIVFKTIRTILTGFGAR</sequence>
<keyword id="KW-0448">Lipopolysaccharide biosynthesis</keyword>
<keyword id="KW-0472">Membrane</keyword>
<keyword id="KW-0808">Transferase</keyword>
<keyword id="KW-0812">Transmembrane</keyword>
<keyword id="KW-1133">Transmembrane helix</keyword>
<reference key="1">
    <citation type="journal article" date="2008" name="J. Bacteriol.">
        <title>The Aeromonas hydrophila wb*O34 gene cluster: genetics and temperature regulation.</title>
        <authorList>
            <person name="Jimenez N."/>
            <person name="Canals R."/>
            <person name="Salo M.T."/>
            <person name="Vilches S."/>
            <person name="Merino S."/>
            <person name="Tomas J.M."/>
        </authorList>
    </citation>
    <scope>NUCLEOTIDE SEQUENCE [GENOMIC DNA]</scope>
    <source>
        <strain>AH-3</strain>
    </source>
</reference>
<reference key="2">
    <citation type="journal article" date="2011" name="J. Bacteriol.">
        <title>A UDP-HexNAc:polyprenol-P GalNAc-1-P transferase (WecP) representing a new subgroup of the enzyme family.</title>
        <authorList>
            <person name="Merino S."/>
            <person name="Jimenez N."/>
            <person name="Molero R."/>
            <person name="Bouamama L."/>
            <person name="Regue M."/>
            <person name="Tomas J.M."/>
        </authorList>
    </citation>
    <scope>FUNCTION</scope>
    <scope>CATALYTIC ACTIVITY</scope>
    <scope>PATHWAY</scope>
    <source>
        <strain>AH-3</strain>
    </source>
</reference>